<dbReference type="EC" id="1.11.1.6" evidence="4"/>
<dbReference type="EMBL" id="X94352">
    <property type="protein sequence ID" value="CAA64077.1"/>
    <property type="molecule type" value="mRNA"/>
</dbReference>
<dbReference type="SMR" id="P55313"/>
<dbReference type="STRING" id="4565.P55313"/>
<dbReference type="PaxDb" id="4565-Traes_7DL_44F6042FE.1"/>
<dbReference type="eggNOG" id="KOG0047">
    <property type="taxonomic scope" value="Eukaryota"/>
</dbReference>
<dbReference type="Proteomes" id="UP000019116">
    <property type="component" value="Unplaced"/>
</dbReference>
<dbReference type="ExpressionAtlas" id="P55313">
    <property type="expression patterns" value="baseline and differential"/>
</dbReference>
<dbReference type="GO" id="GO:0005737">
    <property type="term" value="C:cytoplasm"/>
    <property type="evidence" value="ECO:0000318"/>
    <property type="project" value="GO_Central"/>
</dbReference>
<dbReference type="GO" id="GO:0005829">
    <property type="term" value="C:cytosol"/>
    <property type="evidence" value="ECO:0007669"/>
    <property type="project" value="UniProtKB-SubCell"/>
</dbReference>
<dbReference type="GO" id="GO:0005782">
    <property type="term" value="C:peroxisomal matrix"/>
    <property type="evidence" value="ECO:0007669"/>
    <property type="project" value="UniProtKB-SubCell"/>
</dbReference>
<dbReference type="GO" id="GO:0005777">
    <property type="term" value="C:peroxisome"/>
    <property type="evidence" value="ECO:0000318"/>
    <property type="project" value="GO_Central"/>
</dbReference>
<dbReference type="GO" id="GO:0005886">
    <property type="term" value="C:plasma membrane"/>
    <property type="evidence" value="ECO:0000318"/>
    <property type="project" value="GO_Central"/>
</dbReference>
<dbReference type="GO" id="GO:0004096">
    <property type="term" value="F:catalase activity"/>
    <property type="evidence" value="ECO:0000318"/>
    <property type="project" value="GO_Central"/>
</dbReference>
<dbReference type="GO" id="GO:0020037">
    <property type="term" value="F:heme binding"/>
    <property type="evidence" value="ECO:0000318"/>
    <property type="project" value="GO_Central"/>
</dbReference>
<dbReference type="GO" id="GO:0046872">
    <property type="term" value="F:metal ion binding"/>
    <property type="evidence" value="ECO:0007669"/>
    <property type="project" value="UniProtKB-KW"/>
</dbReference>
<dbReference type="GO" id="GO:0042744">
    <property type="term" value="P:hydrogen peroxide catabolic process"/>
    <property type="evidence" value="ECO:0000318"/>
    <property type="project" value="GO_Central"/>
</dbReference>
<dbReference type="GO" id="GO:0009725">
    <property type="term" value="P:response to hormone"/>
    <property type="evidence" value="ECO:0007669"/>
    <property type="project" value="UniProtKB-ARBA"/>
</dbReference>
<dbReference type="GO" id="GO:0042542">
    <property type="term" value="P:response to hydrogen peroxide"/>
    <property type="evidence" value="ECO:0000318"/>
    <property type="project" value="GO_Central"/>
</dbReference>
<dbReference type="CDD" id="cd08154">
    <property type="entry name" value="catalase_clade_1"/>
    <property type="match status" value="1"/>
</dbReference>
<dbReference type="FunFam" id="2.40.180.10:FF:000002">
    <property type="entry name" value="Catalase"/>
    <property type="match status" value="1"/>
</dbReference>
<dbReference type="Gene3D" id="2.40.180.10">
    <property type="entry name" value="Catalase core domain"/>
    <property type="match status" value="1"/>
</dbReference>
<dbReference type="InterPro" id="IPR018028">
    <property type="entry name" value="Catalase"/>
</dbReference>
<dbReference type="InterPro" id="IPR024708">
    <property type="entry name" value="Catalase_AS"/>
</dbReference>
<dbReference type="InterPro" id="IPR024711">
    <property type="entry name" value="Catalase_clade1/3"/>
</dbReference>
<dbReference type="InterPro" id="IPR011614">
    <property type="entry name" value="Catalase_core"/>
</dbReference>
<dbReference type="InterPro" id="IPR002226">
    <property type="entry name" value="Catalase_haem_BS"/>
</dbReference>
<dbReference type="InterPro" id="IPR010582">
    <property type="entry name" value="Catalase_immune_responsive"/>
</dbReference>
<dbReference type="InterPro" id="IPR020835">
    <property type="entry name" value="Catalase_sf"/>
</dbReference>
<dbReference type="PANTHER" id="PTHR11465">
    <property type="entry name" value="CATALASE"/>
    <property type="match status" value="1"/>
</dbReference>
<dbReference type="PANTHER" id="PTHR11465:SF60">
    <property type="entry name" value="CATALASE ISOZYME B"/>
    <property type="match status" value="1"/>
</dbReference>
<dbReference type="Pfam" id="PF00199">
    <property type="entry name" value="Catalase"/>
    <property type="match status" value="1"/>
</dbReference>
<dbReference type="Pfam" id="PF06628">
    <property type="entry name" value="Catalase-rel"/>
    <property type="match status" value="1"/>
</dbReference>
<dbReference type="PIRSF" id="PIRSF038928">
    <property type="entry name" value="Catalase_clade1-3"/>
    <property type="match status" value="1"/>
</dbReference>
<dbReference type="PRINTS" id="PR00067">
    <property type="entry name" value="CATALASE"/>
</dbReference>
<dbReference type="SMART" id="SM01060">
    <property type="entry name" value="Catalase"/>
    <property type="match status" value="1"/>
</dbReference>
<dbReference type="SUPFAM" id="SSF56634">
    <property type="entry name" value="Heme-dependent catalase-like"/>
    <property type="match status" value="1"/>
</dbReference>
<dbReference type="PROSITE" id="PS00437">
    <property type="entry name" value="CATALASE_1"/>
    <property type="match status" value="1"/>
</dbReference>
<dbReference type="PROSITE" id="PS00438">
    <property type="entry name" value="CATALASE_2"/>
    <property type="match status" value="1"/>
</dbReference>
<dbReference type="PROSITE" id="PS51402">
    <property type="entry name" value="CATALASE_3"/>
    <property type="match status" value="1"/>
</dbReference>
<organism>
    <name type="scientific">Triticum aestivum</name>
    <name type="common">Wheat</name>
    <dbReference type="NCBI Taxonomy" id="4565"/>
    <lineage>
        <taxon>Eukaryota</taxon>
        <taxon>Viridiplantae</taxon>
        <taxon>Streptophyta</taxon>
        <taxon>Embryophyta</taxon>
        <taxon>Tracheophyta</taxon>
        <taxon>Spermatophyta</taxon>
        <taxon>Magnoliopsida</taxon>
        <taxon>Liliopsida</taxon>
        <taxon>Poales</taxon>
        <taxon>Poaceae</taxon>
        <taxon>BOP clade</taxon>
        <taxon>Pooideae</taxon>
        <taxon>Triticodae</taxon>
        <taxon>Triticeae</taxon>
        <taxon>Triticinae</taxon>
        <taxon>Triticum</taxon>
    </lineage>
</organism>
<reference key="1">
    <citation type="submission" date="1996-01" db="EMBL/GenBank/DDBJ databases">
        <authorList>
            <person name="Song Z."/>
            <person name="Zhu Y."/>
            <person name="Huiliu G.J."/>
        </authorList>
    </citation>
    <scope>NUCLEOTIDE SEQUENCE [MRNA]</scope>
</reference>
<feature type="chain" id="PRO_0000084968" description="Catalase">
    <location>
        <begin position="1"/>
        <end position="492"/>
    </location>
</feature>
<feature type="active site" evidence="4">
    <location>
        <position position="65"/>
    </location>
</feature>
<feature type="active site" evidence="4">
    <location>
        <position position="138"/>
    </location>
</feature>
<feature type="binding site" description="axial binding residue" evidence="2">
    <location>
        <position position="348"/>
    </location>
    <ligand>
        <name>heme</name>
        <dbReference type="ChEBI" id="CHEBI:30413"/>
    </ligand>
    <ligandPart>
        <name>Fe</name>
        <dbReference type="ChEBI" id="CHEBI:18248"/>
    </ligandPart>
</feature>
<evidence type="ECO:0000250" key="1"/>
<evidence type="ECO:0000250" key="2">
    <source>
        <dbReference type="UniProtKB" id="P04040"/>
    </source>
</evidence>
<evidence type="ECO:0000250" key="3">
    <source>
        <dbReference type="UniProtKB" id="P25819"/>
    </source>
</evidence>
<evidence type="ECO:0000255" key="4">
    <source>
        <dbReference type="PROSITE-ProRule" id="PRU10013"/>
    </source>
</evidence>
<evidence type="ECO:0000305" key="5"/>
<protein>
    <recommendedName>
        <fullName>Catalase</fullName>
        <ecNumber evidence="4">1.11.1.6</ecNumber>
    </recommendedName>
</protein>
<proteinExistence type="evidence at transcript level"/>
<accession>P55313</accession>
<comment type="function">
    <text evidence="2">Catalyzes the degradation of hydrogen peroxide (H(2)O(2)) generated by peroxisomal oxidases to water and oxygen, thereby protecting cells from the toxic effects of hydrogen peroxide.</text>
</comment>
<comment type="catalytic activity">
    <reaction evidence="4">
        <text>2 H2O2 = O2 + 2 H2O</text>
        <dbReference type="Rhea" id="RHEA:20309"/>
        <dbReference type="ChEBI" id="CHEBI:15377"/>
        <dbReference type="ChEBI" id="CHEBI:15379"/>
        <dbReference type="ChEBI" id="CHEBI:16240"/>
        <dbReference type="EC" id="1.11.1.6"/>
    </reaction>
</comment>
<comment type="cofactor">
    <cofactor evidence="2">
        <name>heme</name>
        <dbReference type="ChEBI" id="CHEBI:30413"/>
    </cofactor>
</comment>
<comment type="subunit">
    <text evidence="1">Homotetramer.</text>
</comment>
<comment type="subcellular location">
    <subcellularLocation>
        <location evidence="3">Cytoplasm</location>
        <location evidence="3">Cytosol</location>
    </subcellularLocation>
    <subcellularLocation>
        <location evidence="3">Peroxisome matrix</location>
    </subcellularLocation>
</comment>
<comment type="similarity">
    <text evidence="5">Belongs to the catalase family.</text>
</comment>
<gene>
    <name type="primary">CATA</name>
</gene>
<name>CATA2_WHEAT</name>
<sequence length="492" mass="56480">MDPYKHRPTSGANSAYWTTNSGAPVWNNNNALTVGHRGPILLEDYHLIEKLAQFDRERIPERVVHARGASAKGFFEVTHDVSQLTCADFLRAPGVQTPVIVRFSTVVHERGSPETLRDPRGFAVKFYTREGNFDLVGNNMPVFFIRDGMKFPDMVHAFKPSSKTNMQENWRVVDFFSHHPESLHMFTFLFDDVGIPLNYRHMDGFGVNTYTLISRDGKAHLVKFHWKPTCGVKCLLDDEAVTVGGTCHTHATKDLTDSIAAGNYPEWKLFIQTIDADHEDRFDFDPLDVTKTWPEDIIPLQPVGRMVLNKNIDNFFAENEQLAFCPAVTVPGIHYSDDKLLQTRIFSYADTQRHRLGPNYLMLPVNAPKCAHHNNHHDGLMNFIHRDEEVNYFPSRVDPTRHAEKDPMPPRVLSGCREKCIIDKENNFKQAGERYRSFDPARQDRFLQRWVDALTDARVTHEIQSIWVSYWSQCDASLGQKLASRLKIKPNM</sequence>
<keyword id="KW-0963">Cytoplasm</keyword>
<keyword id="KW-0349">Heme</keyword>
<keyword id="KW-0376">Hydrogen peroxide</keyword>
<keyword id="KW-0408">Iron</keyword>
<keyword id="KW-0479">Metal-binding</keyword>
<keyword id="KW-0560">Oxidoreductase</keyword>
<keyword id="KW-0575">Peroxidase</keyword>
<keyword id="KW-0576">Peroxisome</keyword>
<keyword id="KW-1185">Reference proteome</keyword>